<keyword id="KW-0963">Cytoplasm</keyword>
<keyword id="KW-0903">Direct protein sequencing</keyword>
<keyword id="KW-0269">Exonuclease</keyword>
<keyword id="KW-0378">Hydrolase</keyword>
<keyword id="KW-0469">Meiosis</keyword>
<keyword id="KW-0479">Metal-binding</keyword>
<keyword id="KW-0540">Nuclease</keyword>
<keyword id="KW-0539">Nucleus</keyword>
<keyword id="KW-1185">Reference proteome</keyword>
<keyword id="KW-0694">RNA-binding</keyword>
<comment type="function">
    <text evidence="4 6">3'-exoribonuclease that has a preference for poly(A) tails of mRNAs, thereby efficiently degrading poly(A) tails. Exonucleolytic degradation of the poly(A) tail is often the first step in the decay of eukaryotic mRNAs. Required during meiotic maturation to silence certain maternal mRNAs translationally. Does not require an adenosine residue at the 3' end, however, the addition of 25 non-adenylate residues at the 3' terminus, or a 3' terminal phosphate is inhibitory. Involved in dormant mRNAs regulation during oocyte maturation by counteracting polyadenylation mediated by papd4/gld2nt in immature eggs. During maturation it is excluded from the ribonucleoprotein complex, allowing poly(A) elongation by papd4/gld2nt and activation of mRNAs.</text>
</comment>
<comment type="catalytic activity">
    <reaction>
        <text>Exonucleolytic cleavage of poly(A) to 5'-AMP.</text>
        <dbReference type="EC" id="3.1.13.4"/>
    </reaction>
</comment>
<comment type="cofactor">
    <cofactor evidence="1">
        <name>a divalent metal cation</name>
        <dbReference type="ChEBI" id="CHEBI:60240"/>
    </cofactor>
</comment>
<comment type="subunit">
    <text>Component of a complex at least composed of cpeb1, cpsf1, papd4/gld2, pabpc1/ePAB, parn and sympk.</text>
</comment>
<comment type="subcellular location">
    <subcellularLocation>
        <location evidence="4">Cytoplasm</location>
    </subcellularLocation>
    <subcellularLocation>
        <location evidence="4">Nucleus</location>
    </subcellularLocation>
</comment>
<comment type="tissue specificity">
    <text evidence="4 5">In retina, it is constitutively present in most retinal cells, including the photoreceptors.</text>
</comment>
<comment type="developmental stage">
    <text evidence="4">Expressed throughout early development.</text>
</comment>
<comment type="PTM">
    <text evidence="4">A 62 kDa form, which is produced by proteolytic cleavage, also exists.</text>
</comment>
<comment type="similarity">
    <text evidence="7">Belongs to the CAF1 family.</text>
</comment>
<comment type="sequence caution" evidence="7">
    <conflict type="miscellaneous discrepancy">
        <sequence resource="EMBL-CDS" id="AAH73682"/>
    </conflict>
    <text>Contaminating sequence. Potential poly-A sequence.</text>
</comment>
<accession>Q90ZA1</accession>
<accession>Q6GN38</accession>
<accession>Q6NTN9</accession>
<sequence>MEITRSNFKDTLPKVYKAIEEADFLAIDGEFSGISDGPSVSTLTNGFDTPEERYTKLKKHSMEFLLFQFGLCTFNYDNTEAKYLMKSFNFYIFPKPFNRNSPDKKFVCQSSSIDFLANQGFDFNKVFRNGIPYLNQEEERVLRDQYEDRRSQSNGASTMSYISPNSSKTPVSIPDEQKGFIDKVVERVEDFLKNEQKSMNVEPCTGYQRKLIYQTLNWKYPRGIHVETVESEKKERYIVISKVDEEERKRMEQQKQAKEREELDDAVGFSRIIQAISSSGKLVVGHNMLLDVMHTIHQFFCQLPDELNEFKEVTNCVFPRVLDTKLMASTNPFKEIIYNTSLAELEKRLKEAPFKPPKVDSAEGFQSYNTASEQLHEAGYDAYITGLCFISMANYLGSFLSPPKDYVSCRSKIVRPFFNKLFLMRIMDIPYLNLEGPDLQPKRDNVLHVTFPKEWKTSDLYQLFSAFGNIQVSWIDDTSAFVSLSQPEQVQIAVNTSKYAESYRIQTYAEYIEKKNDESQTKRKWAEDGWKDLERKRLKTQYNSYIPQNPVFYGNCFAPSFAVKRSMSPIQEEAASDDTEEVHTHENDPSNPGATEQGKKPKNHKRQKIDSAPPETSDGGSSVLFEVPDTW</sequence>
<feature type="chain" id="PRO_0000212855" description="Poly(A)-specific ribonuclease PARN">
    <location>
        <begin position="1"/>
        <end position="631"/>
    </location>
</feature>
<feature type="domain" description="R3H" evidence="2">
    <location>
        <begin position="178"/>
        <end position="244"/>
    </location>
</feature>
<feature type="region of interest" description="Disordered" evidence="3">
    <location>
        <begin position="147"/>
        <end position="173"/>
    </location>
</feature>
<feature type="region of interest" description="Disordered" evidence="3">
    <location>
        <begin position="568"/>
        <end position="631"/>
    </location>
</feature>
<feature type="compositionally biased region" description="Polar residues" evidence="3">
    <location>
        <begin position="152"/>
        <end position="170"/>
    </location>
</feature>
<feature type="binding site" evidence="1">
    <location>
        <position position="28"/>
    </location>
    <ligand>
        <name>a divalent metal cation</name>
        <dbReference type="ChEBI" id="CHEBI:60240"/>
        <note>catalytic</note>
    </ligand>
</feature>
<feature type="binding site" evidence="1">
    <location>
        <position position="30"/>
    </location>
    <ligand>
        <name>a divalent metal cation</name>
        <dbReference type="ChEBI" id="CHEBI:60240"/>
        <note>catalytic</note>
    </ligand>
</feature>
<feature type="binding site" evidence="1">
    <location>
        <position position="291"/>
    </location>
    <ligand>
        <name>a divalent metal cation</name>
        <dbReference type="ChEBI" id="CHEBI:60240"/>
        <note>catalytic</note>
    </ligand>
</feature>
<feature type="binding site" evidence="1">
    <location>
        <position position="381"/>
    </location>
    <ligand>
        <name>a divalent metal cation</name>
        <dbReference type="ChEBI" id="CHEBI:60240"/>
        <note>catalytic</note>
    </ligand>
</feature>
<feature type="site" description="Interaction with poly(A)" evidence="1">
    <location>
        <position position="325"/>
    </location>
</feature>
<feature type="sequence conflict" description="In Ref. 3; AA sequence." evidence="7" ref="3">
    <original>T</original>
    <variation>P</variation>
    <location>
        <position position="330"/>
    </location>
</feature>
<feature type="sequence conflict" description="In Ref. 2; AAH68919." evidence="7" ref="2">
    <original>L</original>
    <variation>P</variation>
    <location>
        <position position="375"/>
    </location>
</feature>
<organism>
    <name type="scientific">Xenopus laevis</name>
    <name type="common">African clawed frog</name>
    <dbReference type="NCBI Taxonomy" id="8355"/>
    <lineage>
        <taxon>Eukaryota</taxon>
        <taxon>Metazoa</taxon>
        <taxon>Chordata</taxon>
        <taxon>Craniata</taxon>
        <taxon>Vertebrata</taxon>
        <taxon>Euteleostomi</taxon>
        <taxon>Amphibia</taxon>
        <taxon>Batrachia</taxon>
        <taxon>Anura</taxon>
        <taxon>Pipoidea</taxon>
        <taxon>Pipidae</taxon>
        <taxon>Xenopodinae</taxon>
        <taxon>Xenopus</taxon>
        <taxon>Xenopus</taxon>
    </lineage>
</organism>
<name>PARN_XENLA</name>
<evidence type="ECO:0000250" key="1">
    <source>
        <dbReference type="UniProtKB" id="O95453"/>
    </source>
</evidence>
<evidence type="ECO:0000255" key="2">
    <source>
        <dbReference type="PROSITE-ProRule" id="PRU00382"/>
    </source>
</evidence>
<evidence type="ECO:0000256" key="3">
    <source>
        <dbReference type="SAM" id="MobiDB-lite"/>
    </source>
</evidence>
<evidence type="ECO:0000269" key="4">
    <source>
    </source>
</evidence>
<evidence type="ECO:0000269" key="5">
    <source>
    </source>
</evidence>
<evidence type="ECO:0000269" key="6">
    <source>
    </source>
</evidence>
<evidence type="ECO:0000305" key="7"/>
<reference key="1">
    <citation type="journal article" date="2001" name="RNA">
        <title>The mechanism and regulation of deadenylation: identification and characterization of Xenopus PARN.</title>
        <authorList>
            <person name="Copeland P.R."/>
            <person name="Wormington M."/>
        </authorList>
    </citation>
    <scope>NUCLEOTIDE SEQUENCE [MRNA]</scope>
    <scope>FUNCTION</scope>
    <scope>SUBCELLULAR LOCATION</scope>
    <scope>CLEAVAGE</scope>
    <scope>TISSUE SPECIFICITY</scope>
    <scope>DEVELOPMENTAL STAGE</scope>
    <source>
        <tissue>Kidney</tissue>
    </source>
</reference>
<reference key="2">
    <citation type="submission" date="2004-04" db="EMBL/GenBank/DDBJ databases">
        <authorList>
            <consortium name="NIH - Xenopus Gene Collection (XGC) project"/>
        </authorList>
    </citation>
    <scope>NUCLEOTIDE SEQUENCE [LARGE SCALE MRNA]</scope>
    <source>
        <tissue>Embryo</tissue>
        <tissue>Ovary</tissue>
    </source>
</reference>
<reference key="3">
    <citation type="journal article" date="1998" name="EMBO J.">
        <title>The deadenylating nuclease (DAN) is involved in poly(A) tail removal during the meiotic maturation of Xenopus oocytes.</title>
        <authorList>
            <person name="Koerner C.G."/>
            <person name="Wormington M."/>
            <person name="Muckenthaler M."/>
            <person name="Schneider S."/>
            <person name="Dehlin E."/>
            <person name="Wahle E."/>
        </authorList>
    </citation>
    <scope>PROTEIN SEQUENCE OF 237-242; 326-334; 421-425 AND 505-513</scope>
    <scope>FUNCTION</scope>
</reference>
<reference key="4">
    <citation type="journal article" date="2003" name="Curr. Biol.">
        <title>Nocturnin, a deadenylase in Xenopus laevis retina: a mechanism for posttranscriptional control of circadian-related mRNA.</title>
        <authorList>
            <person name="Baggs J.E."/>
            <person name="Green C.B."/>
        </authorList>
    </citation>
    <scope>TISSUE SPECIFICITY</scope>
</reference>
<reference key="5">
    <citation type="journal article" date="2006" name="Mol. Cell">
        <title>Opposing polymerase-deadenylase activities regulate cytoplasmic polyadenylation.</title>
        <authorList>
            <person name="Kim J.H."/>
            <person name="Richter J.D."/>
        </authorList>
    </citation>
    <scope>INTERACTION WITH PAPD4</scope>
</reference>
<proteinExistence type="evidence at protein level"/>
<gene>
    <name type="primary">parn</name>
</gene>
<dbReference type="EC" id="3.1.13.4"/>
<dbReference type="EMBL" id="AF309688">
    <property type="protein sequence ID" value="AAK64218.1"/>
    <property type="molecule type" value="mRNA"/>
</dbReference>
<dbReference type="EMBL" id="BC068919">
    <property type="protein sequence ID" value="AAH68919.1"/>
    <property type="molecule type" value="mRNA"/>
</dbReference>
<dbReference type="EMBL" id="BC073682">
    <property type="protein sequence ID" value="AAH73682.1"/>
    <property type="status" value="ALT_SEQ"/>
    <property type="molecule type" value="mRNA"/>
</dbReference>
<dbReference type="RefSeq" id="NP_001081143.1">
    <property type="nucleotide sequence ID" value="NM_001087674.1"/>
</dbReference>
<dbReference type="SMR" id="Q90ZA1"/>
<dbReference type="IntAct" id="Q90ZA1">
    <property type="interactions" value="2"/>
</dbReference>
<dbReference type="DNASU" id="394409"/>
<dbReference type="GeneID" id="394409"/>
<dbReference type="KEGG" id="xla:394409"/>
<dbReference type="AGR" id="Xenbase:XB-GENE-1003109"/>
<dbReference type="CTD" id="394409"/>
<dbReference type="Xenbase" id="XB-GENE-1003109">
    <property type="gene designation" value="parn.L"/>
</dbReference>
<dbReference type="OMA" id="LTTCHED"/>
<dbReference type="OrthoDB" id="1432093at2759"/>
<dbReference type="BRENDA" id="3.1.13.4">
    <property type="organism ID" value="6725"/>
</dbReference>
<dbReference type="Proteomes" id="UP000186698">
    <property type="component" value="Chromosome 9_10L"/>
</dbReference>
<dbReference type="Bgee" id="394409">
    <property type="expression patterns" value="Expressed in blastula and 19 other cell types or tissues"/>
</dbReference>
<dbReference type="GO" id="GO:0005737">
    <property type="term" value="C:cytoplasm"/>
    <property type="evidence" value="ECO:0007669"/>
    <property type="project" value="UniProtKB-SubCell"/>
</dbReference>
<dbReference type="GO" id="GO:0005634">
    <property type="term" value="C:nucleus"/>
    <property type="evidence" value="ECO:0000318"/>
    <property type="project" value="GO_Central"/>
</dbReference>
<dbReference type="GO" id="GO:0000175">
    <property type="term" value="F:3'-5'-RNA exonuclease activity"/>
    <property type="evidence" value="ECO:0000318"/>
    <property type="project" value="GO_Central"/>
</dbReference>
<dbReference type="GO" id="GO:0043169">
    <property type="term" value="F:cation binding"/>
    <property type="evidence" value="ECO:0000250"/>
    <property type="project" value="UniProtKB"/>
</dbReference>
<dbReference type="GO" id="GO:0046872">
    <property type="term" value="F:metal ion binding"/>
    <property type="evidence" value="ECO:0007669"/>
    <property type="project" value="UniProtKB-KW"/>
</dbReference>
<dbReference type="GO" id="GO:0004535">
    <property type="term" value="F:poly(A)-specific ribonuclease activity"/>
    <property type="evidence" value="ECO:0007669"/>
    <property type="project" value="UniProtKB-EC"/>
</dbReference>
<dbReference type="GO" id="GO:0003723">
    <property type="term" value="F:RNA binding"/>
    <property type="evidence" value="ECO:0000250"/>
    <property type="project" value="UniProtKB"/>
</dbReference>
<dbReference type="GO" id="GO:0051321">
    <property type="term" value="P:meiotic cell cycle"/>
    <property type="evidence" value="ECO:0007669"/>
    <property type="project" value="UniProtKB-KW"/>
</dbReference>
<dbReference type="GO" id="GO:0000289">
    <property type="term" value="P:nuclear-transcribed mRNA poly(A) tail shortening"/>
    <property type="evidence" value="ECO:0000318"/>
    <property type="project" value="GO_Central"/>
</dbReference>
<dbReference type="GO" id="GO:1990431">
    <property type="term" value="P:priRNA 3'-end processing"/>
    <property type="evidence" value="ECO:0000318"/>
    <property type="project" value="GO_Central"/>
</dbReference>
<dbReference type="GO" id="GO:1990432">
    <property type="term" value="P:siRNA 3'-end processing"/>
    <property type="evidence" value="ECO:0000318"/>
    <property type="project" value="GO_Central"/>
</dbReference>
<dbReference type="CDD" id="cd02637">
    <property type="entry name" value="R3H_PARN"/>
    <property type="match status" value="1"/>
</dbReference>
<dbReference type="CDD" id="cd12428">
    <property type="entry name" value="RRM_PARN"/>
    <property type="match status" value="1"/>
</dbReference>
<dbReference type="FunFam" id="3.30.420.10:FF:000035">
    <property type="entry name" value="Poly(A)-specific ribonuclease PARN"/>
    <property type="match status" value="1"/>
</dbReference>
<dbReference type="FunFam" id="3.30.420.10:FF:000120">
    <property type="entry name" value="Poly(A)-specific ribonuclease PARN"/>
    <property type="match status" value="1"/>
</dbReference>
<dbReference type="FunFam" id="3.30.70.330:FF:000196">
    <property type="entry name" value="Poly(A)-specific ribonuclease PARN"/>
    <property type="match status" value="1"/>
</dbReference>
<dbReference type="Gene3D" id="3.30.70.330">
    <property type="match status" value="1"/>
</dbReference>
<dbReference type="Gene3D" id="3.30.420.10">
    <property type="entry name" value="Ribonuclease H-like superfamily/Ribonuclease H"/>
    <property type="match status" value="2"/>
</dbReference>
<dbReference type="InterPro" id="IPR051181">
    <property type="entry name" value="CAF1_poly(A)_ribonucleases"/>
</dbReference>
<dbReference type="InterPro" id="IPR012677">
    <property type="entry name" value="Nucleotide-bd_a/b_plait_sf"/>
</dbReference>
<dbReference type="InterPro" id="IPR034042">
    <property type="entry name" value="PARN_R3H"/>
</dbReference>
<dbReference type="InterPro" id="IPR014789">
    <property type="entry name" value="PolyA-riboNase_RNA-binding"/>
</dbReference>
<dbReference type="InterPro" id="IPR001374">
    <property type="entry name" value="R3H_dom"/>
</dbReference>
<dbReference type="InterPro" id="IPR036867">
    <property type="entry name" value="R3H_dom_sf"/>
</dbReference>
<dbReference type="InterPro" id="IPR035979">
    <property type="entry name" value="RBD_domain_sf"/>
</dbReference>
<dbReference type="InterPro" id="IPR006941">
    <property type="entry name" value="RNase_CAF1"/>
</dbReference>
<dbReference type="InterPro" id="IPR012337">
    <property type="entry name" value="RNaseH-like_sf"/>
</dbReference>
<dbReference type="InterPro" id="IPR036397">
    <property type="entry name" value="RNaseH_sf"/>
</dbReference>
<dbReference type="PANTHER" id="PTHR15092">
    <property type="entry name" value="POLY A -SPECIFIC RIBONUCLEASE/TARGET OF EGR1, MEMBER 1"/>
    <property type="match status" value="1"/>
</dbReference>
<dbReference type="PANTHER" id="PTHR15092:SF44">
    <property type="entry name" value="POLY(A)-SPECIFIC RIBONUCLEASE PARN"/>
    <property type="match status" value="1"/>
</dbReference>
<dbReference type="Pfam" id="PF04857">
    <property type="entry name" value="CAF1"/>
    <property type="match status" value="1"/>
</dbReference>
<dbReference type="Pfam" id="PF01424">
    <property type="entry name" value="R3H"/>
    <property type="match status" value="1"/>
</dbReference>
<dbReference type="Pfam" id="PF08675">
    <property type="entry name" value="RNA_bind"/>
    <property type="match status" value="1"/>
</dbReference>
<dbReference type="SUPFAM" id="SSF82708">
    <property type="entry name" value="R3H domain"/>
    <property type="match status" value="1"/>
</dbReference>
<dbReference type="SUPFAM" id="SSF53098">
    <property type="entry name" value="Ribonuclease H-like"/>
    <property type="match status" value="1"/>
</dbReference>
<dbReference type="SUPFAM" id="SSF54928">
    <property type="entry name" value="RNA-binding domain, RBD"/>
    <property type="match status" value="1"/>
</dbReference>
<dbReference type="PROSITE" id="PS51061">
    <property type="entry name" value="R3H"/>
    <property type="match status" value="1"/>
</dbReference>
<protein>
    <recommendedName>
        <fullName>Poly(A)-specific ribonuclease PARN</fullName>
        <ecNumber>3.1.13.4</ecNumber>
    </recommendedName>
    <alternativeName>
        <fullName>Deadenylating nuclease</fullName>
    </alternativeName>
    <alternativeName>
        <fullName>Deadenylation nuclease</fullName>
    </alternativeName>
    <alternativeName>
        <fullName>Polyadenylate-specific ribonuclease</fullName>
    </alternativeName>
    <alternativeName>
        <fullName>parn-A</fullName>
    </alternativeName>
</protein>